<dbReference type="EC" id="4.2.2.2"/>
<dbReference type="EMBL" id="AAHF01000008">
    <property type="protein sequence ID" value="EAL87175.1"/>
    <property type="molecule type" value="Genomic_DNA"/>
</dbReference>
<dbReference type="RefSeq" id="XP_749213.1">
    <property type="nucleotide sequence ID" value="XM_744120.1"/>
</dbReference>
<dbReference type="SMR" id="Q4WIT0"/>
<dbReference type="STRING" id="330879.Q4WIT0"/>
<dbReference type="Allergome" id="8991">
    <property type="allergen name" value="Asp f PL"/>
</dbReference>
<dbReference type="GlyCosmos" id="Q4WIT0">
    <property type="glycosylation" value="2 sites, No reported glycans"/>
</dbReference>
<dbReference type="EnsemblFungi" id="EAL87175">
    <property type="protein sequence ID" value="EAL87175"/>
    <property type="gene ID" value="AFUA_2G00760"/>
</dbReference>
<dbReference type="GeneID" id="3507249"/>
<dbReference type="KEGG" id="afm:AFUA_2G00760"/>
<dbReference type="VEuPathDB" id="FungiDB:Afu2g00760"/>
<dbReference type="eggNOG" id="ENOG502S66G">
    <property type="taxonomic scope" value="Eukaryota"/>
</dbReference>
<dbReference type="HOGENOM" id="CLU_021894_1_0_1"/>
<dbReference type="InParanoid" id="Q4WIT0"/>
<dbReference type="OMA" id="NYWIDHV"/>
<dbReference type="OrthoDB" id="1637350at2759"/>
<dbReference type="BRENDA" id="4.2.2.2">
    <property type="organism ID" value="508"/>
</dbReference>
<dbReference type="Proteomes" id="UP000002530">
    <property type="component" value="Chromosome 2"/>
</dbReference>
<dbReference type="GO" id="GO:0005576">
    <property type="term" value="C:extracellular region"/>
    <property type="evidence" value="ECO:0000250"/>
    <property type="project" value="UniProtKB"/>
</dbReference>
<dbReference type="GO" id="GO:0070051">
    <property type="term" value="F:fibrinogen binding"/>
    <property type="evidence" value="ECO:0000314"/>
    <property type="project" value="AspGD"/>
</dbReference>
<dbReference type="GO" id="GO:0046872">
    <property type="term" value="F:metal ion binding"/>
    <property type="evidence" value="ECO:0007669"/>
    <property type="project" value="UniProtKB-KW"/>
</dbReference>
<dbReference type="GO" id="GO:0030570">
    <property type="term" value="F:pectate lyase activity"/>
    <property type="evidence" value="ECO:0000250"/>
    <property type="project" value="UniProtKB"/>
</dbReference>
<dbReference type="GO" id="GO:0071555">
    <property type="term" value="P:cell wall organization"/>
    <property type="evidence" value="ECO:0007669"/>
    <property type="project" value="UniProtKB-KW"/>
</dbReference>
<dbReference type="GO" id="GO:0045490">
    <property type="term" value="P:pectin catabolic process"/>
    <property type="evidence" value="ECO:0000250"/>
    <property type="project" value="UniProtKB"/>
</dbReference>
<dbReference type="FunFam" id="2.160.20.10:FF:000036">
    <property type="entry name" value="Pectate lyase A"/>
    <property type="match status" value="1"/>
</dbReference>
<dbReference type="Gene3D" id="2.160.20.10">
    <property type="entry name" value="Single-stranded right-handed beta-helix, Pectin lyase-like"/>
    <property type="match status" value="1"/>
</dbReference>
<dbReference type="InterPro" id="IPR002022">
    <property type="entry name" value="Pec_lyase"/>
</dbReference>
<dbReference type="InterPro" id="IPR012334">
    <property type="entry name" value="Pectin_lyas_fold"/>
</dbReference>
<dbReference type="InterPro" id="IPR011050">
    <property type="entry name" value="Pectin_lyase_fold/virulence"/>
</dbReference>
<dbReference type="InterPro" id="IPR045032">
    <property type="entry name" value="PEL"/>
</dbReference>
<dbReference type="PANTHER" id="PTHR31683">
    <property type="entry name" value="PECTATE LYASE 18-RELATED"/>
    <property type="match status" value="1"/>
</dbReference>
<dbReference type="PANTHER" id="PTHR31683:SF18">
    <property type="entry name" value="PECTATE LYASE 21-RELATED"/>
    <property type="match status" value="1"/>
</dbReference>
<dbReference type="Pfam" id="PF00544">
    <property type="entry name" value="Pectate_lyase_4"/>
    <property type="match status" value="1"/>
</dbReference>
<dbReference type="SMART" id="SM00656">
    <property type="entry name" value="Amb_all"/>
    <property type="match status" value="1"/>
</dbReference>
<dbReference type="SUPFAM" id="SSF51126">
    <property type="entry name" value="Pectin lyase-like"/>
    <property type="match status" value="1"/>
</dbReference>
<keyword id="KW-0106">Calcium</keyword>
<keyword id="KW-0119">Carbohydrate metabolism</keyword>
<keyword id="KW-0961">Cell wall biogenesis/degradation</keyword>
<keyword id="KW-0325">Glycoprotein</keyword>
<keyword id="KW-0456">Lyase</keyword>
<keyword id="KW-0479">Metal-binding</keyword>
<keyword id="KW-0624">Polysaccharide degradation</keyword>
<keyword id="KW-1185">Reference proteome</keyword>
<keyword id="KW-0964">Secreted</keyword>
<keyword id="KW-0732">Signal</keyword>
<name>PLYA_ASPFU</name>
<comment type="function">
    <text evidence="1">Pectinolytic enzyme consist of four classes of enzymes: pectin lyase, polygalacturonase, pectin methylesterase and rhamnogalacturonase. Among pectinolytic enzymes, pectin lyase is the most important in depolymerization of pectin, since it cleaves internal glycosidic bonds of highly methylated pectins. Favors pectate, the anion, over pectin, the methyl ester (By similarity).</text>
</comment>
<comment type="catalytic activity">
    <reaction>
        <text>Eliminative cleavage of (1-&gt;4)-alpha-D-galacturonan to give oligosaccharides with 4-deoxy-alpha-D-galact-4-enuronosyl groups at their non-reducing ends.</text>
        <dbReference type="EC" id="4.2.2.2"/>
    </reaction>
</comment>
<comment type="cofactor">
    <cofactor evidence="1">
        <name>Ca(2+)</name>
        <dbReference type="ChEBI" id="CHEBI:29108"/>
    </cofactor>
    <text evidence="1">Binds 1 Ca(2+) ion per subunit.</text>
</comment>
<comment type="subcellular location">
    <subcellularLocation>
        <location evidence="1">Secreted</location>
    </subcellularLocation>
</comment>
<comment type="similarity">
    <text evidence="3">Belongs to the polysaccharide lyase 1 family.</text>
</comment>
<organism>
    <name type="scientific">Aspergillus fumigatus (strain ATCC MYA-4609 / CBS 101355 / FGSC A1100 / Af293)</name>
    <name type="common">Neosartorya fumigata</name>
    <dbReference type="NCBI Taxonomy" id="330879"/>
    <lineage>
        <taxon>Eukaryota</taxon>
        <taxon>Fungi</taxon>
        <taxon>Dikarya</taxon>
        <taxon>Ascomycota</taxon>
        <taxon>Pezizomycotina</taxon>
        <taxon>Eurotiomycetes</taxon>
        <taxon>Eurotiomycetidae</taxon>
        <taxon>Eurotiales</taxon>
        <taxon>Aspergillaceae</taxon>
        <taxon>Aspergillus</taxon>
        <taxon>Aspergillus subgen. Fumigati</taxon>
    </lineage>
</organism>
<accession>Q4WIT0</accession>
<evidence type="ECO:0000250" key="1"/>
<evidence type="ECO:0000255" key="2"/>
<evidence type="ECO:0000305" key="3"/>
<sequence length="321" mass="33821">MKFVATLIACGLSGLALAAPTATVNSLGKRAADDAAFGYASLNGGTTGGAGGTTTTVSSYAAFTAAVSSDAKKVVYVSGPIKQSAKQVKVGSNTSIIGKDSTAVLEGFGLLVKEKSNVIIRNLGVKKVLAENGDAIGIQYSNNVWVDHVDVSSDRDHDKDYYDGLIDVTHAADYVTISNSYIHDHWKASLVGHSDNNGDEDKGHLRVTYANNYWSNINSRAPSLRFGTGHIYNSYFENVSDGINTRDGAQVLVESNQFVGSSKALYSTDDGYAVERDNDFGGAKNTALQGTLTTVPYSYSLLGSSKVKSAVVGVAGQTLKF</sequence>
<feature type="signal peptide" evidence="2">
    <location>
        <begin position="1"/>
        <end position="18"/>
    </location>
</feature>
<feature type="chain" id="PRO_0000394561" description="Probable pectate lyase A">
    <location>
        <begin position="19"/>
        <end position="321"/>
    </location>
</feature>
<feature type="active site" evidence="2">
    <location>
        <position position="220"/>
    </location>
</feature>
<feature type="binding site" evidence="1">
    <location>
        <position position="134"/>
    </location>
    <ligand>
        <name>Ca(2+)</name>
        <dbReference type="ChEBI" id="CHEBI:29108"/>
    </ligand>
</feature>
<feature type="binding site" evidence="1">
    <location>
        <position position="163"/>
    </location>
    <ligand>
        <name>Ca(2+)</name>
        <dbReference type="ChEBI" id="CHEBI:29108"/>
    </ligand>
</feature>
<feature type="binding site" evidence="1">
    <location>
        <position position="167"/>
    </location>
    <ligand>
        <name>Ca(2+)</name>
        <dbReference type="ChEBI" id="CHEBI:29108"/>
    </ligand>
</feature>
<feature type="glycosylation site" description="N-linked (GlcNAc...) asparagine" evidence="2">
    <location>
        <position position="93"/>
    </location>
</feature>
<feature type="glycosylation site" description="N-linked (GlcNAc...) asparagine" evidence="2">
    <location>
        <position position="238"/>
    </location>
</feature>
<proteinExistence type="inferred from homology"/>
<protein>
    <recommendedName>
        <fullName>Probable pectate lyase A</fullName>
        <ecNumber>4.2.2.2</ecNumber>
    </recommendedName>
</protein>
<gene>
    <name type="primary">plyA</name>
    <name type="ORF">AFUA_2G00760</name>
</gene>
<reference key="1">
    <citation type="journal article" date="2005" name="Nature">
        <title>Genomic sequence of the pathogenic and allergenic filamentous fungus Aspergillus fumigatus.</title>
        <authorList>
            <person name="Nierman W.C."/>
            <person name="Pain A."/>
            <person name="Anderson M.J."/>
            <person name="Wortman J.R."/>
            <person name="Kim H.S."/>
            <person name="Arroyo J."/>
            <person name="Berriman M."/>
            <person name="Abe K."/>
            <person name="Archer D.B."/>
            <person name="Bermejo C."/>
            <person name="Bennett J.W."/>
            <person name="Bowyer P."/>
            <person name="Chen D."/>
            <person name="Collins M."/>
            <person name="Coulsen R."/>
            <person name="Davies R."/>
            <person name="Dyer P.S."/>
            <person name="Farman M.L."/>
            <person name="Fedorova N."/>
            <person name="Fedorova N.D."/>
            <person name="Feldblyum T.V."/>
            <person name="Fischer R."/>
            <person name="Fosker N."/>
            <person name="Fraser A."/>
            <person name="Garcia J.L."/>
            <person name="Garcia M.J."/>
            <person name="Goble A."/>
            <person name="Goldman G.H."/>
            <person name="Gomi K."/>
            <person name="Griffith-Jones S."/>
            <person name="Gwilliam R."/>
            <person name="Haas B.J."/>
            <person name="Haas H."/>
            <person name="Harris D.E."/>
            <person name="Horiuchi H."/>
            <person name="Huang J."/>
            <person name="Humphray S."/>
            <person name="Jimenez J."/>
            <person name="Keller N."/>
            <person name="Khouri H."/>
            <person name="Kitamoto K."/>
            <person name="Kobayashi T."/>
            <person name="Konzack S."/>
            <person name="Kulkarni R."/>
            <person name="Kumagai T."/>
            <person name="Lafton A."/>
            <person name="Latge J.-P."/>
            <person name="Li W."/>
            <person name="Lord A."/>
            <person name="Lu C."/>
            <person name="Majoros W.H."/>
            <person name="May G.S."/>
            <person name="Miller B.L."/>
            <person name="Mohamoud Y."/>
            <person name="Molina M."/>
            <person name="Monod M."/>
            <person name="Mouyna I."/>
            <person name="Mulligan S."/>
            <person name="Murphy L.D."/>
            <person name="O'Neil S."/>
            <person name="Paulsen I."/>
            <person name="Penalva M.A."/>
            <person name="Pertea M."/>
            <person name="Price C."/>
            <person name="Pritchard B.L."/>
            <person name="Quail M.A."/>
            <person name="Rabbinowitsch E."/>
            <person name="Rawlins N."/>
            <person name="Rajandream M.A."/>
            <person name="Reichard U."/>
            <person name="Renauld H."/>
            <person name="Robson G.D."/>
            <person name="Rodriguez de Cordoba S."/>
            <person name="Rodriguez-Pena J.M."/>
            <person name="Ronning C.M."/>
            <person name="Rutter S."/>
            <person name="Salzberg S.L."/>
            <person name="Sanchez M."/>
            <person name="Sanchez-Ferrero J.C."/>
            <person name="Saunders D."/>
            <person name="Seeger K."/>
            <person name="Squares R."/>
            <person name="Squares S."/>
            <person name="Takeuchi M."/>
            <person name="Tekaia F."/>
            <person name="Turner G."/>
            <person name="Vazquez de Aldana C.R."/>
            <person name="Weidman J."/>
            <person name="White O."/>
            <person name="Woodward J.R."/>
            <person name="Yu J.-H."/>
            <person name="Fraser C.M."/>
            <person name="Galagan J.E."/>
            <person name="Asai K."/>
            <person name="Machida M."/>
            <person name="Hall N."/>
            <person name="Barrell B.G."/>
            <person name="Denning D.W."/>
        </authorList>
    </citation>
    <scope>NUCLEOTIDE SEQUENCE [LARGE SCALE GENOMIC DNA]</scope>
    <source>
        <strain>ATCC MYA-4609 / CBS 101355 / FGSC A1100 / Af293</strain>
    </source>
</reference>